<gene>
    <name evidence="1" type="primary">accA</name>
    <name type="ordered locus">str0393</name>
</gene>
<accession>Q5M174</accession>
<comment type="function">
    <text evidence="1">Component of the acetyl coenzyme A carboxylase (ACC) complex. First, biotin carboxylase catalyzes the carboxylation of biotin on its carrier protein (BCCP) and then the CO(2) group is transferred by the carboxyltransferase to acetyl-CoA to form malonyl-CoA.</text>
</comment>
<comment type="catalytic activity">
    <reaction evidence="1">
        <text>N(6)-carboxybiotinyl-L-lysyl-[protein] + acetyl-CoA = N(6)-biotinyl-L-lysyl-[protein] + malonyl-CoA</text>
        <dbReference type="Rhea" id="RHEA:54728"/>
        <dbReference type="Rhea" id="RHEA-COMP:10505"/>
        <dbReference type="Rhea" id="RHEA-COMP:10506"/>
        <dbReference type="ChEBI" id="CHEBI:57288"/>
        <dbReference type="ChEBI" id="CHEBI:57384"/>
        <dbReference type="ChEBI" id="CHEBI:83144"/>
        <dbReference type="ChEBI" id="CHEBI:83145"/>
        <dbReference type="EC" id="2.1.3.15"/>
    </reaction>
</comment>
<comment type="pathway">
    <text evidence="1">Lipid metabolism; malonyl-CoA biosynthesis; malonyl-CoA from acetyl-CoA: step 1/1.</text>
</comment>
<comment type="subunit">
    <text evidence="1">Acetyl-CoA carboxylase is a heterohexamer composed of biotin carboxyl carrier protein (AccB), biotin carboxylase (AccC) and two subunits each of ACCase subunit alpha (AccA) and ACCase subunit beta (AccD).</text>
</comment>
<comment type="subcellular location">
    <subcellularLocation>
        <location evidence="1">Cytoplasm</location>
    </subcellularLocation>
</comment>
<comment type="similarity">
    <text evidence="1">Belongs to the AccA family.</text>
</comment>
<organism>
    <name type="scientific">Streptococcus thermophilus (strain CNRZ 1066)</name>
    <dbReference type="NCBI Taxonomy" id="299768"/>
    <lineage>
        <taxon>Bacteria</taxon>
        <taxon>Bacillati</taxon>
        <taxon>Bacillota</taxon>
        <taxon>Bacilli</taxon>
        <taxon>Lactobacillales</taxon>
        <taxon>Streptococcaceae</taxon>
        <taxon>Streptococcus</taxon>
    </lineage>
</organism>
<keyword id="KW-0067">ATP-binding</keyword>
<keyword id="KW-0963">Cytoplasm</keyword>
<keyword id="KW-0275">Fatty acid biosynthesis</keyword>
<keyword id="KW-0276">Fatty acid metabolism</keyword>
<keyword id="KW-0444">Lipid biosynthesis</keyword>
<keyword id="KW-0443">Lipid metabolism</keyword>
<keyword id="KW-0547">Nucleotide-binding</keyword>
<keyword id="KW-0808">Transferase</keyword>
<dbReference type="EC" id="2.1.3.15" evidence="1"/>
<dbReference type="EMBL" id="CP000024">
    <property type="protein sequence ID" value="AAV61995.1"/>
    <property type="molecule type" value="Genomic_DNA"/>
</dbReference>
<dbReference type="RefSeq" id="WP_011226893.1">
    <property type="nucleotide sequence ID" value="NC_006449.1"/>
</dbReference>
<dbReference type="SMR" id="Q5M174"/>
<dbReference type="KEGG" id="stc:str0393"/>
<dbReference type="HOGENOM" id="CLU_015486_0_2_9"/>
<dbReference type="UniPathway" id="UPA00655">
    <property type="reaction ID" value="UER00711"/>
</dbReference>
<dbReference type="GO" id="GO:0009317">
    <property type="term" value="C:acetyl-CoA carboxylase complex"/>
    <property type="evidence" value="ECO:0007669"/>
    <property type="project" value="InterPro"/>
</dbReference>
<dbReference type="GO" id="GO:0003989">
    <property type="term" value="F:acetyl-CoA carboxylase activity"/>
    <property type="evidence" value="ECO:0007669"/>
    <property type="project" value="InterPro"/>
</dbReference>
<dbReference type="GO" id="GO:0005524">
    <property type="term" value="F:ATP binding"/>
    <property type="evidence" value="ECO:0007669"/>
    <property type="project" value="UniProtKB-KW"/>
</dbReference>
<dbReference type="GO" id="GO:0016743">
    <property type="term" value="F:carboxyl- or carbamoyltransferase activity"/>
    <property type="evidence" value="ECO:0007669"/>
    <property type="project" value="UniProtKB-UniRule"/>
</dbReference>
<dbReference type="GO" id="GO:0006633">
    <property type="term" value="P:fatty acid biosynthetic process"/>
    <property type="evidence" value="ECO:0007669"/>
    <property type="project" value="UniProtKB-KW"/>
</dbReference>
<dbReference type="GO" id="GO:2001295">
    <property type="term" value="P:malonyl-CoA biosynthetic process"/>
    <property type="evidence" value="ECO:0007669"/>
    <property type="project" value="UniProtKB-UniRule"/>
</dbReference>
<dbReference type="Gene3D" id="3.90.226.10">
    <property type="entry name" value="2-enoyl-CoA Hydratase, Chain A, domain 1"/>
    <property type="match status" value="1"/>
</dbReference>
<dbReference type="HAMAP" id="MF_00823">
    <property type="entry name" value="AcetylCoA_CT_alpha"/>
    <property type="match status" value="1"/>
</dbReference>
<dbReference type="InterPro" id="IPR001095">
    <property type="entry name" value="Acetyl_CoA_COase_a_su"/>
</dbReference>
<dbReference type="InterPro" id="IPR029045">
    <property type="entry name" value="ClpP/crotonase-like_dom_sf"/>
</dbReference>
<dbReference type="InterPro" id="IPR011763">
    <property type="entry name" value="COA_CT_C"/>
</dbReference>
<dbReference type="NCBIfam" id="TIGR00513">
    <property type="entry name" value="accA"/>
    <property type="match status" value="1"/>
</dbReference>
<dbReference type="NCBIfam" id="NF041504">
    <property type="entry name" value="AccA_sub"/>
    <property type="match status" value="1"/>
</dbReference>
<dbReference type="NCBIfam" id="NF004344">
    <property type="entry name" value="PRK05724.1"/>
    <property type="match status" value="1"/>
</dbReference>
<dbReference type="NCBIfam" id="NF008971">
    <property type="entry name" value="PRK12319.1"/>
    <property type="match status" value="1"/>
</dbReference>
<dbReference type="PANTHER" id="PTHR42853">
    <property type="entry name" value="ACETYL-COENZYME A CARBOXYLASE CARBOXYL TRANSFERASE SUBUNIT ALPHA"/>
    <property type="match status" value="1"/>
</dbReference>
<dbReference type="PANTHER" id="PTHR42853:SF3">
    <property type="entry name" value="ACETYL-COENZYME A CARBOXYLASE CARBOXYL TRANSFERASE SUBUNIT ALPHA, CHLOROPLASTIC"/>
    <property type="match status" value="1"/>
</dbReference>
<dbReference type="Pfam" id="PF03255">
    <property type="entry name" value="ACCA"/>
    <property type="match status" value="1"/>
</dbReference>
<dbReference type="PRINTS" id="PR01069">
    <property type="entry name" value="ACCCTRFRASEA"/>
</dbReference>
<dbReference type="SUPFAM" id="SSF52096">
    <property type="entry name" value="ClpP/crotonase"/>
    <property type="match status" value="1"/>
</dbReference>
<dbReference type="PROSITE" id="PS50989">
    <property type="entry name" value="COA_CT_CTER"/>
    <property type="match status" value="1"/>
</dbReference>
<evidence type="ECO:0000255" key="1">
    <source>
        <dbReference type="HAMAP-Rule" id="MF_00823"/>
    </source>
</evidence>
<evidence type="ECO:0000255" key="2">
    <source>
        <dbReference type="PROSITE-ProRule" id="PRU01137"/>
    </source>
</evidence>
<feature type="chain" id="PRO_0000223839" description="Acetyl-coenzyme A carboxylase carboxyl transferase subunit alpha">
    <location>
        <begin position="1"/>
        <end position="256"/>
    </location>
</feature>
<feature type="domain" description="CoA carboxyltransferase C-terminal" evidence="2">
    <location>
        <begin position="1"/>
        <end position="236"/>
    </location>
</feature>
<proteinExistence type="inferred from homology"/>
<protein>
    <recommendedName>
        <fullName evidence="1">Acetyl-coenzyme A carboxylase carboxyl transferase subunit alpha</fullName>
        <shortName evidence="1">ACCase subunit alpha</shortName>
        <shortName evidence="1">Acetyl-CoA carboxylase carboxyltransferase subunit alpha</shortName>
        <ecNumber evidence="1">2.1.3.15</ecNumber>
    </recommendedName>
</protein>
<reference key="1">
    <citation type="journal article" date="2004" name="Nat. Biotechnol.">
        <title>Complete sequence and comparative genome analysis of the dairy bacterium Streptococcus thermophilus.</title>
        <authorList>
            <person name="Bolotin A."/>
            <person name="Quinquis B."/>
            <person name="Renault P."/>
            <person name="Sorokin A."/>
            <person name="Ehrlich S.D."/>
            <person name="Kulakauskas S."/>
            <person name="Lapidus A."/>
            <person name="Goltsman E."/>
            <person name="Mazur M."/>
            <person name="Pusch G.D."/>
            <person name="Fonstein M."/>
            <person name="Overbeek R."/>
            <person name="Kyprides N."/>
            <person name="Purnelle B."/>
            <person name="Prozzi D."/>
            <person name="Ngui K."/>
            <person name="Masuy D."/>
            <person name="Hancy F."/>
            <person name="Burteau S."/>
            <person name="Boutry M."/>
            <person name="Delcour J."/>
            <person name="Goffeau A."/>
            <person name="Hols P."/>
        </authorList>
    </citation>
    <scope>NUCLEOTIDE SEQUENCE [LARGE SCALE GENOMIC DNA]</scope>
    <source>
        <strain>CNRZ 1066</strain>
    </source>
</reference>
<name>ACCA_STRT1</name>
<sequence length="256" mass="28174">MSDVARILKEARDQGRLTALDFAKEIFDDFIELHGDRNFRDDGAVIGGIGRLNGQAVTVVGIQKGKNLQDNLNRNFGQPHPEGYRKALRLMKQAEKFGRPVVTFINTAGAYPGVGAEERGQGEAIARNLMEMSDLKVPIIAIIIGEGGSGGALALAVADKVWMLENTIYSILSPEGFATILWKDGSRSEEAAELMKITSGELLNMGIVDKVIPERGYFTSEIIEAIKTAIVDELAELSQLSTEDLLEARYQRFRRY</sequence>